<keyword id="KW-0963">Cytoplasm</keyword>
<keyword id="KW-0521">NADP</keyword>
<keyword id="KW-0560">Oxidoreductase</keyword>
<reference key="1">
    <citation type="journal article" date="1997" name="Gene">
        <title>Sequence of the non-phosphorylating glyceraldehyde-3-phosphate dehydrogenase from Nicotiana plumbaginifolia and phylogenetic origin of the gene family.</title>
        <authorList>
            <person name="Habenicht A."/>
            <person name="Quesada A."/>
            <person name="Cerff R."/>
        </authorList>
    </citation>
    <scope>NUCLEOTIDE SEQUENCE [MRNA]</scope>
</reference>
<evidence type="ECO:0000250" key="1"/>
<evidence type="ECO:0000255" key="2">
    <source>
        <dbReference type="PROSITE-ProRule" id="PRU10007"/>
    </source>
</evidence>
<evidence type="ECO:0000255" key="3">
    <source>
        <dbReference type="PROSITE-ProRule" id="PRU10008"/>
    </source>
</evidence>
<evidence type="ECO:0000305" key="4"/>
<dbReference type="EC" id="1.2.1.9"/>
<dbReference type="EMBL" id="U87848">
    <property type="protein sequence ID" value="AAB47571.1"/>
    <property type="molecule type" value="mRNA"/>
</dbReference>
<dbReference type="SMR" id="P93338"/>
<dbReference type="GO" id="GO:0005737">
    <property type="term" value="C:cytoplasm"/>
    <property type="evidence" value="ECO:0007669"/>
    <property type="project" value="UniProtKB-SubCell"/>
</dbReference>
<dbReference type="GO" id="GO:0008886">
    <property type="term" value="F:glyceraldehyde-3-phosphate dehydrogenase (NADP+) (non-phosphorylating) activity"/>
    <property type="evidence" value="ECO:0007669"/>
    <property type="project" value="UniProtKB-EC"/>
</dbReference>
<dbReference type="GO" id="GO:0008911">
    <property type="term" value="F:lactaldehyde dehydrogenase (NAD+) activity"/>
    <property type="evidence" value="ECO:0007669"/>
    <property type="project" value="TreeGrafter"/>
</dbReference>
<dbReference type="CDD" id="cd07082">
    <property type="entry name" value="ALDH_F11_NP-GAPDH"/>
    <property type="match status" value="1"/>
</dbReference>
<dbReference type="FunFam" id="3.40.309.10:FF:000016">
    <property type="entry name" value="NADP-dependent glyceraldehyde-3-phosphate dehydrogenase"/>
    <property type="match status" value="1"/>
</dbReference>
<dbReference type="FunFam" id="3.40.605.10:FF:000013">
    <property type="entry name" value="NADP-dependent glyceraldehyde-3-phosphate dehydrogenase"/>
    <property type="match status" value="1"/>
</dbReference>
<dbReference type="Gene3D" id="3.40.605.10">
    <property type="entry name" value="Aldehyde Dehydrogenase, Chain A, domain 1"/>
    <property type="match status" value="1"/>
</dbReference>
<dbReference type="Gene3D" id="3.40.309.10">
    <property type="entry name" value="Aldehyde Dehydrogenase, Chain A, domain 2"/>
    <property type="match status" value="1"/>
</dbReference>
<dbReference type="InterPro" id="IPR016161">
    <property type="entry name" value="Ald_DH/histidinol_DH"/>
</dbReference>
<dbReference type="InterPro" id="IPR016163">
    <property type="entry name" value="Ald_DH_C"/>
</dbReference>
<dbReference type="InterPro" id="IPR016160">
    <property type="entry name" value="Ald_DH_CS_CYS"/>
</dbReference>
<dbReference type="InterPro" id="IPR029510">
    <property type="entry name" value="Ald_DH_CS_GLU"/>
</dbReference>
<dbReference type="InterPro" id="IPR016162">
    <property type="entry name" value="Ald_DH_N"/>
</dbReference>
<dbReference type="InterPro" id="IPR015590">
    <property type="entry name" value="Aldehyde_DH_dom"/>
</dbReference>
<dbReference type="InterPro" id="IPR051020">
    <property type="entry name" value="ALDH-related_metabolic_enz"/>
</dbReference>
<dbReference type="PANTHER" id="PTHR42991">
    <property type="entry name" value="ALDEHYDE DEHYDROGENASE"/>
    <property type="match status" value="1"/>
</dbReference>
<dbReference type="PANTHER" id="PTHR42991:SF1">
    <property type="entry name" value="ALDEHYDE DEHYDROGENASE"/>
    <property type="match status" value="1"/>
</dbReference>
<dbReference type="Pfam" id="PF00171">
    <property type="entry name" value="Aldedh"/>
    <property type="match status" value="1"/>
</dbReference>
<dbReference type="SUPFAM" id="SSF53720">
    <property type="entry name" value="ALDH-like"/>
    <property type="match status" value="1"/>
</dbReference>
<dbReference type="PROSITE" id="PS00070">
    <property type="entry name" value="ALDEHYDE_DEHYDR_CYS"/>
    <property type="match status" value="1"/>
</dbReference>
<dbReference type="PROSITE" id="PS00687">
    <property type="entry name" value="ALDEHYDE_DEHYDR_GLU"/>
    <property type="match status" value="1"/>
</dbReference>
<accession>P93338</accession>
<protein>
    <recommendedName>
        <fullName>NADP-dependent glyceraldehyde-3-phosphate dehydrogenase</fullName>
        <ecNumber>1.2.1.9</ecNumber>
    </recommendedName>
    <alternativeName>
        <fullName>Glyceraldehyde-3-phosphate dehydrogenase [NADP(+)]</fullName>
    </alternativeName>
    <alternativeName>
        <fullName>Non-phosphorylating glyceraldehyde 3-phosphate dehydrogenase</fullName>
    </alternativeName>
    <alternativeName>
        <fullName>Triosephosphate dehydrogenase</fullName>
    </alternativeName>
</protein>
<feature type="chain" id="PRO_0000056577" description="NADP-dependent glyceraldehyde-3-phosphate dehydrogenase">
    <location>
        <begin position="1"/>
        <end position="496"/>
    </location>
</feature>
<feature type="active site" description="Proton acceptor" evidence="2 3">
    <location>
        <position position="264"/>
    </location>
</feature>
<feature type="active site" description="Nucleophile" evidence="2 3">
    <location>
        <position position="298"/>
    </location>
</feature>
<feature type="binding site" evidence="1">
    <location>
        <position position="116"/>
    </location>
    <ligand>
        <name>substrate</name>
    </ligand>
</feature>
<feature type="binding site" evidence="1">
    <location>
        <begin position="169"/>
        <end position="170"/>
    </location>
    <ligand>
        <name>substrate</name>
    </ligand>
</feature>
<feature type="binding site" evidence="1">
    <location>
        <position position="192"/>
    </location>
    <ligand>
        <name>NADP(+)</name>
        <dbReference type="ChEBI" id="CHEBI:58349"/>
    </ligand>
</feature>
<feature type="binding site" evidence="1">
    <location>
        <position position="195"/>
    </location>
    <ligand>
        <name>NADP(+)</name>
        <dbReference type="ChEBI" id="CHEBI:58349"/>
    </ligand>
</feature>
<feature type="binding site" evidence="1">
    <location>
        <position position="230"/>
    </location>
    <ligand>
        <name>NADP(+)</name>
        <dbReference type="ChEBI" id="CHEBI:58349"/>
    </ligand>
</feature>
<feature type="binding site" evidence="1">
    <location>
        <begin position="245"/>
        <end position="249"/>
    </location>
    <ligand>
        <name>NAD(+)</name>
        <dbReference type="ChEBI" id="CHEBI:57540"/>
    </ligand>
</feature>
<feature type="binding site" evidence="1">
    <location>
        <begin position="297"/>
        <end position="299"/>
    </location>
    <ligand>
        <name>substrate</name>
    </ligand>
</feature>
<feature type="binding site" evidence="1">
    <location>
        <position position="391"/>
    </location>
    <ligand>
        <name>NADP(+)</name>
        <dbReference type="ChEBI" id="CHEBI:58349"/>
    </ligand>
</feature>
<feature type="binding site" evidence="1">
    <location>
        <position position="451"/>
    </location>
    <ligand>
        <name>substrate</name>
    </ligand>
</feature>
<feature type="site" description="Transition state stabilizer" evidence="1">
    <location>
        <position position="169"/>
    </location>
</feature>
<sequence length="496" mass="53144">MAGNGVFVDIIEGDVFKYYSEGEWKKSASGKSVAIINPTTRKTQYKVQACTQEEVNKVMEVAKTAQKSWAKTPLWKRAELLHKAAAILKEHKAPIAECLVKEIAKPAKDAVTEVVRSGDLVSYTAEEGVRILGEGKFLVSDSFPGNERTKYCLTSKIPLGVILAIPPFNYPVNLAVSKIAPALIAGNSLVLKPPTQGAVACLHMVHCFHLAGFPKGLISCVTGKGSEIGDFLTMHPGVHCISFTGGDTGVAISKKAGMIPLQMELGGKDACIVLEDADLDLAAGSIVKGGFSYSGQRCTAVKVVLVMESVADALVEKVNAKVAKLTVGPPEDDCDITPVVSESSANFIEGLVMDAKQKNATFCQQYKREGNLIWPLLLDNVRPDMRIAWEEPFGPVLPVIRINSVEEGIHHCNASNFGLQGCVFTKDINKAILISDAMETGTVQINSAPARGPDHFPFQGIKDSGIGSQGITNSINMMTKVKTTVINLPTPSYTMG</sequence>
<organism>
    <name type="scientific">Nicotiana plumbaginifolia</name>
    <name type="common">Leadwort-leaved tobacco</name>
    <name type="synonym">Tex-Mex tobacco</name>
    <dbReference type="NCBI Taxonomy" id="4092"/>
    <lineage>
        <taxon>Eukaryota</taxon>
        <taxon>Viridiplantae</taxon>
        <taxon>Streptophyta</taxon>
        <taxon>Embryophyta</taxon>
        <taxon>Tracheophyta</taxon>
        <taxon>Spermatophyta</taxon>
        <taxon>Magnoliopsida</taxon>
        <taxon>eudicotyledons</taxon>
        <taxon>Gunneridae</taxon>
        <taxon>Pentapetalae</taxon>
        <taxon>asterids</taxon>
        <taxon>lamiids</taxon>
        <taxon>Solanales</taxon>
        <taxon>Solanaceae</taxon>
        <taxon>Nicotianoideae</taxon>
        <taxon>Nicotianeae</taxon>
        <taxon>Nicotiana</taxon>
    </lineage>
</organism>
<proteinExistence type="evidence at transcript level"/>
<gene>
    <name type="primary">GAPN</name>
</gene>
<name>GAPN_NICPL</name>
<comment type="function">
    <text>Important as a means of generating NADPH for biosynthetic reactions.</text>
</comment>
<comment type="catalytic activity">
    <reaction>
        <text>D-glyceraldehyde 3-phosphate + NADP(+) + H2O = (2R)-3-phosphoglycerate + NADPH + 2 H(+)</text>
        <dbReference type="Rhea" id="RHEA:14669"/>
        <dbReference type="ChEBI" id="CHEBI:15377"/>
        <dbReference type="ChEBI" id="CHEBI:15378"/>
        <dbReference type="ChEBI" id="CHEBI:57783"/>
        <dbReference type="ChEBI" id="CHEBI:58272"/>
        <dbReference type="ChEBI" id="CHEBI:58349"/>
        <dbReference type="ChEBI" id="CHEBI:59776"/>
        <dbReference type="EC" id="1.2.1.9"/>
    </reaction>
</comment>
<comment type="subcellular location">
    <subcellularLocation>
        <location>Cytoplasm</location>
    </subcellularLocation>
</comment>
<comment type="similarity">
    <text evidence="4">Belongs to the aldehyde dehydrogenase family.</text>
</comment>